<dbReference type="EC" id="3.5.2.7" evidence="1"/>
<dbReference type="EMBL" id="CP001103">
    <property type="protein sequence ID" value="AEA97045.1"/>
    <property type="molecule type" value="Genomic_DNA"/>
</dbReference>
<dbReference type="RefSeq" id="WP_012517399.1">
    <property type="nucleotide sequence ID" value="NC_011138.3"/>
</dbReference>
<dbReference type="SMR" id="B4RW95"/>
<dbReference type="KEGG" id="amc:MADE_1004495"/>
<dbReference type="HOGENOM" id="CLU_041647_0_0_6"/>
<dbReference type="UniPathway" id="UPA00379">
    <property type="reaction ID" value="UER00551"/>
</dbReference>
<dbReference type="Proteomes" id="UP000001870">
    <property type="component" value="Chromosome"/>
</dbReference>
<dbReference type="GO" id="GO:0005737">
    <property type="term" value="C:cytoplasm"/>
    <property type="evidence" value="ECO:0007669"/>
    <property type="project" value="UniProtKB-SubCell"/>
</dbReference>
<dbReference type="GO" id="GO:0050480">
    <property type="term" value="F:imidazolonepropionase activity"/>
    <property type="evidence" value="ECO:0007669"/>
    <property type="project" value="UniProtKB-UniRule"/>
</dbReference>
<dbReference type="GO" id="GO:0005506">
    <property type="term" value="F:iron ion binding"/>
    <property type="evidence" value="ECO:0007669"/>
    <property type="project" value="UniProtKB-UniRule"/>
</dbReference>
<dbReference type="GO" id="GO:0008270">
    <property type="term" value="F:zinc ion binding"/>
    <property type="evidence" value="ECO:0007669"/>
    <property type="project" value="UniProtKB-UniRule"/>
</dbReference>
<dbReference type="GO" id="GO:0019556">
    <property type="term" value="P:L-histidine catabolic process to glutamate and formamide"/>
    <property type="evidence" value="ECO:0007669"/>
    <property type="project" value="UniProtKB-UniPathway"/>
</dbReference>
<dbReference type="GO" id="GO:0019557">
    <property type="term" value="P:L-histidine catabolic process to glutamate and formate"/>
    <property type="evidence" value="ECO:0007669"/>
    <property type="project" value="UniProtKB-UniPathway"/>
</dbReference>
<dbReference type="FunFam" id="3.20.20.140:FF:000007">
    <property type="entry name" value="Imidazolonepropionase"/>
    <property type="match status" value="1"/>
</dbReference>
<dbReference type="Gene3D" id="3.20.20.140">
    <property type="entry name" value="Metal-dependent hydrolases"/>
    <property type="match status" value="1"/>
</dbReference>
<dbReference type="Gene3D" id="2.30.40.10">
    <property type="entry name" value="Urease, subunit C, domain 1"/>
    <property type="match status" value="1"/>
</dbReference>
<dbReference type="HAMAP" id="MF_00372">
    <property type="entry name" value="HutI"/>
    <property type="match status" value="1"/>
</dbReference>
<dbReference type="InterPro" id="IPR006680">
    <property type="entry name" value="Amidohydro-rel"/>
</dbReference>
<dbReference type="InterPro" id="IPR005920">
    <property type="entry name" value="HutI"/>
</dbReference>
<dbReference type="InterPro" id="IPR011059">
    <property type="entry name" value="Metal-dep_hydrolase_composite"/>
</dbReference>
<dbReference type="InterPro" id="IPR032466">
    <property type="entry name" value="Metal_Hydrolase"/>
</dbReference>
<dbReference type="NCBIfam" id="TIGR01224">
    <property type="entry name" value="hutI"/>
    <property type="match status" value="1"/>
</dbReference>
<dbReference type="PANTHER" id="PTHR42752">
    <property type="entry name" value="IMIDAZOLONEPROPIONASE"/>
    <property type="match status" value="1"/>
</dbReference>
<dbReference type="PANTHER" id="PTHR42752:SF1">
    <property type="entry name" value="IMIDAZOLONEPROPIONASE-RELATED"/>
    <property type="match status" value="1"/>
</dbReference>
<dbReference type="Pfam" id="PF01979">
    <property type="entry name" value="Amidohydro_1"/>
    <property type="match status" value="1"/>
</dbReference>
<dbReference type="SUPFAM" id="SSF51338">
    <property type="entry name" value="Composite domain of metallo-dependent hydrolases"/>
    <property type="match status" value="1"/>
</dbReference>
<dbReference type="SUPFAM" id="SSF51556">
    <property type="entry name" value="Metallo-dependent hydrolases"/>
    <property type="match status" value="1"/>
</dbReference>
<reference key="1">
    <citation type="journal article" date="2008" name="ISME J.">
        <title>Comparative genomics of two ecotypes of the marine planktonic copiotroph Alteromonas macleodii suggests alternative lifestyles associated with different kinds of particulate organic matter.</title>
        <authorList>
            <person name="Ivars-Martinez E."/>
            <person name="Martin-Cuadrado A.-B."/>
            <person name="D'Auria G."/>
            <person name="Mira A."/>
            <person name="Ferriera S."/>
            <person name="Johnson J."/>
            <person name="Friedman R."/>
            <person name="Rodriguez-Valera F."/>
        </authorList>
    </citation>
    <scope>NUCLEOTIDE SEQUENCE [LARGE SCALE GENOMIC DNA]</scope>
    <source>
        <strain>DSM 17117 / CIP 110805 / LMG 28347 / Deep ecotype</strain>
    </source>
</reference>
<sequence length="419" mass="45544">MDSKYDTLIYNVRIASMQHNGMPYGELPPTAIAIKEGHIVALLSCDEQLNDALQQTSTVIDGSRLIPCNENEQPTLPWLLPGFIDCHTHLVYGGNRAEEFEMRLQGASYVEIAERGGGIKGTVKKTRQADEQTLLNTAIKRAMRLCEEGVTTIEVKSGYGLDVDTEIRMLSVAKSLEKHLPVTIQTTYLGAHALPNEFNHDADAYIDFICRDALPQIASLGLADAVDVFCETIGFSLQQTERVFSCAKQYGLPVKAHVEQLSDSKGAVLAAKYGALSVDHIEYLVDSDIPSLVKSETVAVLLPGAFYYLSEVQKPPVEALRAHNVPIAVATDFNPGSSPLASLLTALNMSCVLFKLTPEEALRGATEHAASALGLNDRGVVDIGNVADLTLWDIETPAELVYCINGHRPIAVFKDGKHV</sequence>
<gene>
    <name evidence="1" type="primary">hutI</name>
    <name type="ordered locus">MADE_1004495</name>
</gene>
<feature type="chain" id="PRO_1000121527" description="Imidazolonepropionase">
    <location>
        <begin position="1"/>
        <end position="419"/>
    </location>
</feature>
<feature type="binding site" evidence="1">
    <location>
        <position position="87"/>
    </location>
    <ligand>
        <name>Fe(3+)</name>
        <dbReference type="ChEBI" id="CHEBI:29034"/>
    </ligand>
</feature>
<feature type="binding site" evidence="1">
    <location>
        <position position="87"/>
    </location>
    <ligand>
        <name>Zn(2+)</name>
        <dbReference type="ChEBI" id="CHEBI:29105"/>
    </ligand>
</feature>
<feature type="binding site" evidence="1">
    <location>
        <position position="89"/>
    </location>
    <ligand>
        <name>Fe(3+)</name>
        <dbReference type="ChEBI" id="CHEBI:29034"/>
    </ligand>
</feature>
<feature type="binding site" evidence="1">
    <location>
        <position position="89"/>
    </location>
    <ligand>
        <name>Zn(2+)</name>
        <dbReference type="ChEBI" id="CHEBI:29105"/>
    </ligand>
</feature>
<feature type="binding site" evidence="1">
    <location>
        <position position="96"/>
    </location>
    <ligand>
        <name>4-imidazolone-5-propanoate</name>
        <dbReference type="ChEBI" id="CHEBI:77893"/>
    </ligand>
</feature>
<feature type="binding site" evidence="1">
    <location>
        <position position="159"/>
    </location>
    <ligand>
        <name>4-imidazolone-5-propanoate</name>
        <dbReference type="ChEBI" id="CHEBI:77893"/>
    </ligand>
</feature>
<feature type="binding site" evidence="1">
    <location>
        <position position="159"/>
    </location>
    <ligand>
        <name>N-formimidoyl-L-glutamate</name>
        <dbReference type="ChEBI" id="CHEBI:58928"/>
    </ligand>
</feature>
<feature type="binding site" evidence="1">
    <location>
        <position position="192"/>
    </location>
    <ligand>
        <name>4-imidazolone-5-propanoate</name>
        <dbReference type="ChEBI" id="CHEBI:77893"/>
    </ligand>
</feature>
<feature type="binding site" evidence="1">
    <location>
        <position position="257"/>
    </location>
    <ligand>
        <name>Fe(3+)</name>
        <dbReference type="ChEBI" id="CHEBI:29034"/>
    </ligand>
</feature>
<feature type="binding site" evidence="1">
    <location>
        <position position="257"/>
    </location>
    <ligand>
        <name>Zn(2+)</name>
        <dbReference type="ChEBI" id="CHEBI:29105"/>
    </ligand>
</feature>
<feature type="binding site" evidence="1">
    <location>
        <position position="260"/>
    </location>
    <ligand>
        <name>4-imidazolone-5-propanoate</name>
        <dbReference type="ChEBI" id="CHEBI:77893"/>
    </ligand>
</feature>
<feature type="binding site" evidence="1">
    <location>
        <position position="332"/>
    </location>
    <ligand>
        <name>Fe(3+)</name>
        <dbReference type="ChEBI" id="CHEBI:29034"/>
    </ligand>
</feature>
<feature type="binding site" evidence="1">
    <location>
        <position position="332"/>
    </location>
    <ligand>
        <name>Zn(2+)</name>
        <dbReference type="ChEBI" id="CHEBI:29105"/>
    </ligand>
</feature>
<feature type="binding site" evidence="1">
    <location>
        <position position="334"/>
    </location>
    <ligand>
        <name>N-formimidoyl-L-glutamate</name>
        <dbReference type="ChEBI" id="CHEBI:58928"/>
    </ligand>
</feature>
<feature type="binding site" evidence="1">
    <location>
        <position position="336"/>
    </location>
    <ligand>
        <name>N-formimidoyl-L-glutamate</name>
        <dbReference type="ChEBI" id="CHEBI:58928"/>
    </ligand>
</feature>
<feature type="binding site" evidence="1">
    <location>
        <position position="337"/>
    </location>
    <ligand>
        <name>4-imidazolone-5-propanoate</name>
        <dbReference type="ChEBI" id="CHEBI:77893"/>
    </ligand>
</feature>
<evidence type="ECO:0000255" key="1">
    <source>
        <dbReference type="HAMAP-Rule" id="MF_00372"/>
    </source>
</evidence>
<proteinExistence type="inferred from homology"/>
<name>HUTI_ALTMD</name>
<organism>
    <name type="scientific">Alteromonas mediterranea (strain DSM 17117 / CIP 110805 / LMG 28347 / Deep ecotype)</name>
    <dbReference type="NCBI Taxonomy" id="1774373"/>
    <lineage>
        <taxon>Bacteria</taxon>
        <taxon>Pseudomonadati</taxon>
        <taxon>Pseudomonadota</taxon>
        <taxon>Gammaproteobacteria</taxon>
        <taxon>Alteromonadales</taxon>
        <taxon>Alteromonadaceae</taxon>
        <taxon>Alteromonas/Salinimonas group</taxon>
        <taxon>Alteromonas</taxon>
    </lineage>
</organism>
<keyword id="KW-0963">Cytoplasm</keyword>
<keyword id="KW-0369">Histidine metabolism</keyword>
<keyword id="KW-0378">Hydrolase</keyword>
<keyword id="KW-0408">Iron</keyword>
<keyword id="KW-0479">Metal-binding</keyword>
<keyword id="KW-0862">Zinc</keyword>
<comment type="function">
    <text evidence="1">Catalyzes the hydrolytic cleavage of the carbon-nitrogen bond in imidazolone-5-propanoate to yield N-formimidoyl-L-glutamate. It is the third step in the universal histidine degradation pathway.</text>
</comment>
<comment type="catalytic activity">
    <reaction evidence="1">
        <text>4-imidazolone-5-propanoate + H2O = N-formimidoyl-L-glutamate</text>
        <dbReference type="Rhea" id="RHEA:23660"/>
        <dbReference type="ChEBI" id="CHEBI:15377"/>
        <dbReference type="ChEBI" id="CHEBI:58928"/>
        <dbReference type="ChEBI" id="CHEBI:77893"/>
        <dbReference type="EC" id="3.5.2.7"/>
    </reaction>
</comment>
<comment type="cofactor">
    <cofactor evidence="1">
        <name>Zn(2+)</name>
        <dbReference type="ChEBI" id="CHEBI:29105"/>
    </cofactor>
    <cofactor evidence="1">
        <name>Fe(3+)</name>
        <dbReference type="ChEBI" id="CHEBI:29034"/>
    </cofactor>
    <text evidence="1">Binds 1 zinc or iron ion per subunit.</text>
</comment>
<comment type="pathway">
    <text evidence="1">Amino-acid degradation; L-histidine degradation into L-glutamate; N-formimidoyl-L-glutamate from L-histidine: step 3/3.</text>
</comment>
<comment type="subcellular location">
    <subcellularLocation>
        <location evidence="1">Cytoplasm</location>
    </subcellularLocation>
</comment>
<comment type="similarity">
    <text evidence="1">Belongs to the metallo-dependent hydrolases superfamily. HutI family.</text>
</comment>
<accession>B4RW95</accession>
<accession>F2GB04</accession>
<protein>
    <recommendedName>
        <fullName evidence="1">Imidazolonepropionase</fullName>
        <ecNumber evidence="1">3.5.2.7</ecNumber>
    </recommendedName>
    <alternativeName>
        <fullName evidence="1">Imidazolone-5-propionate hydrolase</fullName>
    </alternativeName>
</protein>